<dbReference type="EMBL" id="AAFW02000040">
    <property type="protein sequence ID" value="EDN63397.1"/>
    <property type="molecule type" value="Genomic_DNA"/>
</dbReference>
<dbReference type="HOGENOM" id="CLU_057912_0_0_1"/>
<dbReference type="Proteomes" id="UP000007060">
    <property type="component" value="Unassembled WGS sequence"/>
</dbReference>
<dbReference type="GO" id="GO:0005743">
    <property type="term" value="C:mitochondrial inner membrane"/>
    <property type="evidence" value="ECO:0007669"/>
    <property type="project" value="TreeGrafter"/>
</dbReference>
<dbReference type="GO" id="GO:0007007">
    <property type="term" value="P:inner mitochondrial membrane organization"/>
    <property type="evidence" value="ECO:0007669"/>
    <property type="project" value="TreeGrafter"/>
</dbReference>
<dbReference type="Gene3D" id="3.60.160.10">
    <property type="entry name" value="Mitochondrial biogenesis AIM24"/>
    <property type="match status" value="1"/>
</dbReference>
<dbReference type="InterPro" id="IPR002838">
    <property type="entry name" value="AIM24"/>
</dbReference>
<dbReference type="InterPro" id="IPR036983">
    <property type="entry name" value="AIM24_sf"/>
</dbReference>
<dbReference type="PANTHER" id="PTHR36959">
    <property type="entry name" value="ALTERED INHERITANCE OF MITOCHONDRIA PROTEIN 24, MITOCHONDRIAL"/>
    <property type="match status" value="1"/>
</dbReference>
<dbReference type="PANTHER" id="PTHR36959:SF2">
    <property type="entry name" value="ALTERED INHERITANCE OF MITOCHONDRIA PROTEIN 24, MITOCHONDRIAL"/>
    <property type="match status" value="1"/>
</dbReference>
<dbReference type="Pfam" id="PF01987">
    <property type="entry name" value="AIM24"/>
    <property type="match status" value="1"/>
</dbReference>
<sequence length="394" mass="44473">MISPRVNTRVWQRSISLLSPQAAKTESNVVTKERTYIENLSKDIATSRFRLVDENGKIASITVQPDIPICIKKDCLVSIHNLNHLSLSYKWLNFWSNLIKFRSFKSSLFHRIIGSSVLEILAAPNFQISRRPFDSSRSLSVLNLTGTKDWNVFGKDSIIAFEQNSSLEIKSPIFPSARSLVSNSSKSQLPRKFQILNGRGNVLVCGGGLVYSIELIDECDKILVNSRNILAINGQSQLDIANSVERQELHVEGAYVGDSSNDTVAPKFIKNQTLKSAYGHTVQFFKRMRSWIRNQYEKRYIYGVDSYFMKIKGPRTILIQTHEMTTSKDNILTKLTSKSHVKKSTVNDNGVNLEKQVANDVNSKIIELANRPSLFIATVSQDGRVDFQSTSKFT</sequence>
<evidence type="ECO:0000250" key="1"/>
<evidence type="ECO:0000255" key="2"/>
<evidence type="ECO:0000305" key="3"/>
<reference key="1">
    <citation type="journal article" date="2007" name="Proc. Natl. Acad. Sci. U.S.A.">
        <title>Genome sequencing and comparative analysis of Saccharomyces cerevisiae strain YJM789.</title>
        <authorList>
            <person name="Wei W."/>
            <person name="McCusker J.H."/>
            <person name="Hyman R.W."/>
            <person name="Jones T."/>
            <person name="Ning Y."/>
            <person name="Cao Z."/>
            <person name="Gu Z."/>
            <person name="Bruno D."/>
            <person name="Miranda M."/>
            <person name="Nguyen M."/>
            <person name="Wilhelmy J."/>
            <person name="Komp C."/>
            <person name="Tamse R."/>
            <person name="Wang X."/>
            <person name="Jia P."/>
            <person name="Luedi P."/>
            <person name="Oefner P.J."/>
            <person name="David L."/>
            <person name="Dietrich F.S."/>
            <person name="Li Y."/>
            <person name="Davis R.W."/>
            <person name="Steinmetz L.M."/>
        </authorList>
    </citation>
    <scope>NUCLEOTIDE SEQUENCE [LARGE SCALE GENOMIC DNA]</scope>
    <source>
        <strain>YJM789</strain>
    </source>
</reference>
<name>AIM24_YEAS7</name>
<feature type="transit peptide" description="Mitochondrion" evidence="2">
    <location>
        <begin position="1"/>
        <end position="111"/>
    </location>
</feature>
<feature type="chain" id="PRO_0000399592" description="Altered inheritance of mitochondria protein 24, mitochondrial">
    <location>
        <begin position="112"/>
        <end position="394"/>
    </location>
</feature>
<comment type="subcellular location">
    <subcellularLocation>
        <location evidence="1">Mitochondrion</location>
    </subcellularLocation>
</comment>
<comment type="similarity">
    <text evidence="3">Belongs to the AIM24 family.</text>
</comment>
<keyword id="KW-0496">Mitochondrion</keyword>
<keyword id="KW-0809">Transit peptide</keyword>
<proteinExistence type="inferred from homology"/>
<protein>
    <recommendedName>
        <fullName>Altered inheritance of mitochondria protein 24, mitochondrial</fullName>
    </recommendedName>
</protein>
<organism>
    <name type="scientific">Saccharomyces cerevisiae (strain YJM789)</name>
    <name type="common">Baker's yeast</name>
    <dbReference type="NCBI Taxonomy" id="307796"/>
    <lineage>
        <taxon>Eukaryota</taxon>
        <taxon>Fungi</taxon>
        <taxon>Dikarya</taxon>
        <taxon>Ascomycota</taxon>
        <taxon>Saccharomycotina</taxon>
        <taxon>Saccharomycetes</taxon>
        <taxon>Saccharomycetales</taxon>
        <taxon>Saccharomycetaceae</taxon>
        <taxon>Saccharomyces</taxon>
    </lineage>
</organism>
<accession>A6ZQ37</accession>
<gene>
    <name type="primary">AIM24</name>
    <name type="synonym">FMP26</name>
    <name type="ORF">SCY_2998</name>
</gene>